<name>TRMFO_LACPL</name>
<gene>
    <name evidence="1" type="primary">trmFO</name>
    <name type="synonym">gid</name>
    <name type="synonym">gidC</name>
    <name type="ordered locus">lp_1848</name>
</gene>
<organism>
    <name type="scientific">Lactiplantibacillus plantarum (strain ATCC BAA-793 / NCIMB 8826 / WCFS1)</name>
    <name type="common">Lactobacillus plantarum</name>
    <dbReference type="NCBI Taxonomy" id="220668"/>
    <lineage>
        <taxon>Bacteria</taxon>
        <taxon>Bacillati</taxon>
        <taxon>Bacillota</taxon>
        <taxon>Bacilli</taxon>
        <taxon>Lactobacillales</taxon>
        <taxon>Lactobacillaceae</taxon>
        <taxon>Lactiplantibacillus</taxon>
    </lineage>
</organism>
<keyword id="KW-0963">Cytoplasm</keyword>
<keyword id="KW-0274">FAD</keyword>
<keyword id="KW-0285">Flavoprotein</keyword>
<keyword id="KW-0489">Methyltransferase</keyword>
<keyword id="KW-0520">NAD</keyword>
<keyword id="KW-0521">NADP</keyword>
<keyword id="KW-1185">Reference proteome</keyword>
<keyword id="KW-0808">Transferase</keyword>
<keyword id="KW-0819">tRNA processing</keyword>
<proteinExistence type="inferred from homology"/>
<sequence length="441" mass="48261">MASIPTVNVIGAGLAGSEAAWHIANMGVNVRLYEMRPNKMTPAHHTAQFAELVCTNSLRANQLANAAGLLKAEMRQMDSIVMQAAEHHAVPAGGALAVDRDTFSAEITAAITALPNVEIINEEITSLPDGITVVATGPLTAASLAKSIQAFNDEDDLHFFDAAAPILTKDSIDMDKVYLKSRYDRGEAAYLNCPMTEAEFDVFYDALIHAEMAEAHDFENSDVFEGCMPIEVMAQRGRQTMLFGPLKPVGLEDPKTGKQPFAVVQLRQDDAAGDLYNIVGFQTHLKWGEQKRVFSLIPGLENVEFVRYGVMHRNTFMKSPKLLTPTYQTQQRPDLFFAGQMTGVEGYIESAASGIVAGTNAARLALGLEPVVFPTDTMMGAMAHYITHTSASNFQPMNANFGIMPKLKQRIRDKRERNTAISERALADLTTFKDETLTVNN</sequence>
<feature type="chain" id="PRO_0000117248" description="Methylenetetrahydrofolate--tRNA-(uracil-5-)-methyltransferase TrmFO">
    <location>
        <begin position="1"/>
        <end position="441"/>
    </location>
</feature>
<feature type="binding site" evidence="1">
    <location>
        <begin position="11"/>
        <end position="16"/>
    </location>
    <ligand>
        <name>FAD</name>
        <dbReference type="ChEBI" id="CHEBI:57692"/>
    </ligand>
</feature>
<accession>Q88W23</accession>
<accession>F9UPI2</accession>
<evidence type="ECO:0000255" key="1">
    <source>
        <dbReference type="HAMAP-Rule" id="MF_01037"/>
    </source>
</evidence>
<protein>
    <recommendedName>
        <fullName evidence="1">Methylenetetrahydrofolate--tRNA-(uracil-5-)-methyltransferase TrmFO</fullName>
        <ecNumber evidence="1">2.1.1.74</ecNumber>
    </recommendedName>
    <alternativeName>
        <fullName evidence="1">Folate-dependent tRNA (uracil-5-)-methyltransferase</fullName>
    </alternativeName>
    <alternativeName>
        <fullName evidence="1">Folate-dependent tRNA(M-5-U54)-methyltransferase</fullName>
    </alternativeName>
</protein>
<reference key="1">
    <citation type="journal article" date="2003" name="Proc. Natl. Acad. Sci. U.S.A.">
        <title>Complete genome sequence of Lactobacillus plantarum WCFS1.</title>
        <authorList>
            <person name="Kleerebezem M."/>
            <person name="Boekhorst J."/>
            <person name="van Kranenburg R."/>
            <person name="Molenaar D."/>
            <person name="Kuipers O.P."/>
            <person name="Leer R."/>
            <person name="Tarchini R."/>
            <person name="Peters S.A."/>
            <person name="Sandbrink H.M."/>
            <person name="Fiers M.W.E.J."/>
            <person name="Stiekema W."/>
            <person name="Klein Lankhorst R.M."/>
            <person name="Bron P.A."/>
            <person name="Hoffer S.M."/>
            <person name="Nierop Groot M.N."/>
            <person name="Kerkhoven R."/>
            <person name="De Vries M."/>
            <person name="Ursing B."/>
            <person name="De Vos W.M."/>
            <person name="Siezen R.J."/>
        </authorList>
    </citation>
    <scope>NUCLEOTIDE SEQUENCE [LARGE SCALE GENOMIC DNA]</scope>
    <source>
        <strain>ATCC BAA-793 / NCIMB 8826 / WCFS1</strain>
    </source>
</reference>
<reference key="2">
    <citation type="journal article" date="2012" name="J. Bacteriol.">
        <title>Complete resequencing and reannotation of the Lactobacillus plantarum WCFS1 genome.</title>
        <authorList>
            <person name="Siezen R.J."/>
            <person name="Francke C."/>
            <person name="Renckens B."/>
            <person name="Boekhorst J."/>
            <person name="Wels M."/>
            <person name="Kleerebezem M."/>
            <person name="van Hijum S.A."/>
        </authorList>
    </citation>
    <scope>NUCLEOTIDE SEQUENCE [LARGE SCALE GENOMIC DNA]</scope>
    <scope>GENOME REANNOTATION</scope>
    <source>
        <strain>ATCC BAA-793 / NCIMB 8826 / WCFS1</strain>
    </source>
</reference>
<dbReference type="EC" id="2.1.1.74" evidence="1"/>
<dbReference type="EMBL" id="AL935263">
    <property type="protein sequence ID" value="CCC79121.1"/>
    <property type="molecule type" value="Genomic_DNA"/>
</dbReference>
<dbReference type="RefSeq" id="WP_003645028.1">
    <property type="nucleotide sequence ID" value="NC_004567.2"/>
</dbReference>
<dbReference type="RefSeq" id="YP_004889635.1">
    <property type="nucleotide sequence ID" value="NC_004567.2"/>
</dbReference>
<dbReference type="SMR" id="Q88W23"/>
<dbReference type="STRING" id="220668.lp_1848"/>
<dbReference type="EnsemblBacteria" id="CCC79121">
    <property type="protein sequence ID" value="CCC79121"/>
    <property type="gene ID" value="lp_1848"/>
</dbReference>
<dbReference type="KEGG" id="lpl:lp_1848"/>
<dbReference type="PATRIC" id="fig|220668.9.peg.1558"/>
<dbReference type="eggNOG" id="COG1206">
    <property type="taxonomic scope" value="Bacteria"/>
</dbReference>
<dbReference type="HOGENOM" id="CLU_033057_1_0_9"/>
<dbReference type="OrthoDB" id="9803114at2"/>
<dbReference type="PhylomeDB" id="Q88W23"/>
<dbReference type="Proteomes" id="UP000000432">
    <property type="component" value="Chromosome"/>
</dbReference>
<dbReference type="GO" id="GO:0005829">
    <property type="term" value="C:cytosol"/>
    <property type="evidence" value="ECO:0007669"/>
    <property type="project" value="TreeGrafter"/>
</dbReference>
<dbReference type="GO" id="GO:0050660">
    <property type="term" value="F:flavin adenine dinucleotide binding"/>
    <property type="evidence" value="ECO:0007669"/>
    <property type="project" value="UniProtKB-UniRule"/>
</dbReference>
<dbReference type="GO" id="GO:0047151">
    <property type="term" value="F:tRNA (uracil(54)-C5)-methyltransferase activity, 5,10-methylenetetrahydrofolate-dependent"/>
    <property type="evidence" value="ECO:0007669"/>
    <property type="project" value="UniProtKB-UniRule"/>
</dbReference>
<dbReference type="GO" id="GO:0030488">
    <property type="term" value="P:tRNA methylation"/>
    <property type="evidence" value="ECO:0007669"/>
    <property type="project" value="TreeGrafter"/>
</dbReference>
<dbReference type="GO" id="GO:0002098">
    <property type="term" value="P:tRNA wobble uridine modification"/>
    <property type="evidence" value="ECO:0007669"/>
    <property type="project" value="TreeGrafter"/>
</dbReference>
<dbReference type="FunFam" id="3.50.50.60:FF:000035">
    <property type="entry name" value="Methylenetetrahydrofolate--tRNA-(uracil-5-)-methyltransferase TrmFO"/>
    <property type="match status" value="1"/>
</dbReference>
<dbReference type="FunFam" id="3.50.50.60:FF:000040">
    <property type="entry name" value="Methylenetetrahydrofolate--tRNA-(uracil-5-)-methyltransferase TrmFO"/>
    <property type="match status" value="1"/>
</dbReference>
<dbReference type="Gene3D" id="3.50.50.60">
    <property type="entry name" value="FAD/NAD(P)-binding domain"/>
    <property type="match status" value="2"/>
</dbReference>
<dbReference type="HAMAP" id="MF_01037">
    <property type="entry name" value="TrmFO"/>
    <property type="match status" value="1"/>
</dbReference>
<dbReference type="InterPro" id="IPR036188">
    <property type="entry name" value="FAD/NAD-bd_sf"/>
</dbReference>
<dbReference type="InterPro" id="IPR002218">
    <property type="entry name" value="MnmG-rel"/>
</dbReference>
<dbReference type="InterPro" id="IPR020595">
    <property type="entry name" value="MnmG-rel_CS"/>
</dbReference>
<dbReference type="InterPro" id="IPR040131">
    <property type="entry name" value="MnmG_N"/>
</dbReference>
<dbReference type="InterPro" id="IPR004417">
    <property type="entry name" value="TrmFO"/>
</dbReference>
<dbReference type="NCBIfam" id="TIGR00137">
    <property type="entry name" value="gid_trmFO"/>
    <property type="match status" value="1"/>
</dbReference>
<dbReference type="NCBIfam" id="NF003739">
    <property type="entry name" value="PRK05335.1"/>
    <property type="match status" value="1"/>
</dbReference>
<dbReference type="PANTHER" id="PTHR11806">
    <property type="entry name" value="GLUCOSE INHIBITED DIVISION PROTEIN A"/>
    <property type="match status" value="1"/>
</dbReference>
<dbReference type="PANTHER" id="PTHR11806:SF2">
    <property type="entry name" value="METHYLENETETRAHYDROFOLATE--TRNA-(URACIL-5-)-METHYLTRANSFERASE TRMFO"/>
    <property type="match status" value="1"/>
</dbReference>
<dbReference type="Pfam" id="PF01134">
    <property type="entry name" value="GIDA"/>
    <property type="match status" value="1"/>
</dbReference>
<dbReference type="SUPFAM" id="SSF51905">
    <property type="entry name" value="FAD/NAD(P)-binding domain"/>
    <property type="match status" value="1"/>
</dbReference>
<dbReference type="PROSITE" id="PS01281">
    <property type="entry name" value="GIDA_2"/>
    <property type="match status" value="1"/>
</dbReference>
<comment type="function">
    <text evidence="1">Catalyzes the folate-dependent formation of 5-methyl-uridine at position 54 (M-5-U54) in all tRNAs.</text>
</comment>
<comment type="catalytic activity">
    <reaction evidence="1">
        <text>uridine(54) in tRNA + (6R)-5,10-methylene-5,6,7,8-tetrahydrofolate + NADH + H(+) = 5-methyluridine(54) in tRNA + (6S)-5,6,7,8-tetrahydrofolate + NAD(+)</text>
        <dbReference type="Rhea" id="RHEA:16873"/>
        <dbReference type="Rhea" id="RHEA-COMP:10167"/>
        <dbReference type="Rhea" id="RHEA-COMP:10193"/>
        <dbReference type="ChEBI" id="CHEBI:15378"/>
        <dbReference type="ChEBI" id="CHEBI:15636"/>
        <dbReference type="ChEBI" id="CHEBI:57453"/>
        <dbReference type="ChEBI" id="CHEBI:57540"/>
        <dbReference type="ChEBI" id="CHEBI:57945"/>
        <dbReference type="ChEBI" id="CHEBI:65315"/>
        <dbReference type="ChEBI" id="CHEBI:74447"/>
        <dbReference type="EC" id="2.1.1.74"/>
    </reaction>
</comment>
<comment type="catalytic activity">
    <reaction evidence="1">
        <text>uridine(54) in tRNA + (6R)-5,10-methylene-5,6,7,8-tetrahydrofolate + NADPH + H(+) = 5-methyluridine(54) in tRNA + (6S)-5,6,7,8-tetrahydrofolate + NADP(+)</text>
        <dbReference type="Rhea" id="RHEA:62372"/>
        <dbReference type="Rhea" id="RHEA-COMP:10167"/>
        <dbReference type="Rhea" id="RHEA-COMP:10193"/>
        <dbReference type="ChEBI" id="CHEBI:15378"/>
        <dbReference type="ChEBI" id="CHEBI:15636"/>
        <dbReference type="ChEBI" id="CHEBI:57453"/>
        <dbReference type="ChEBI" id="CHEBI:57783"/>
        <dbReference type="ChEBI" id="CHEBI:58349"/>
        <dbReference type="ChEBI" id="CHEBI:65315"/>
        <dbReference type="ChEBI" id="CHEBI:74447"/>
        <dbReference type="EC" id="2.1.1.74"/>
    </reaction>
</comment>
<comment type="cofactor">
    <cofactor evidence="1">
        <name>FAD</name>
        <dbReference type="ChEBI" id="CHEBI:57692"/>
    </cofactor>
</comment>
<comment type="subcellular location">
    <subcellularLocation>
        <location evidence="1">Cytoplasm</location>
    </subcellularLocation>
</comment>
<comment type="similarity">
    <text evidence="1">Belongs to the MnmG family. TrmFO subfamily.</text>
</comment>